<feature type="signal peptide" evidence="2">
    <location>
        <begin position="1"/>
        <end position="18"/>
    </location>
</feature>
<feature type="chain" id="PRO_0000395216" description="Probable beta-galactosidase A">
    <location>
        <begin position="19"/>
        <end position="1005"/>
    </location>
</feature>
<feature type="active site" description="Proton donor" evidence="2">
    <location>
        <position position="200"/>
    </location>
</feature>
<feature type="active site" description="Nucleophile" evidence="2">
    <location>
        <position position="298"/>
    </location>
</feature>
<feature type="binding site" evidence="1">
    <location>
        <position position="96"/>
    </location>
    <ligand>
        <name>substrate</name>
    </ligand>
</feature>
<feature type="binding site" evidence="1">
    <location>
        <position position="140"/>
    </location>
    <ligand>
        <name>substrate</name>
    </ligand>
</feature>
<feature type="binding site" evidence="1">
    <location>
        <position position="141"/>
    </location>
    <ligand>
        <name>substrate</name>
    </ligand>
</feature>
<feature type="binding site" evidence="1">
    <location>
        <position position="142"/>
    </location>
    <ligand>
        <name>substrate</name>
    </ligand>
</feature>
<feature type="binding site" evidence="1">
    <location>
        <position position="199"/>
    </location>
    <ligand>
        <name>substrate</name>
    </ligand>
</feature>
<feature type="binding site" evidence="1">
    <location>
        <position position="260"/>
    </location>
    <ligand>
        <name>substrate</name>
    </ligand>
</feature>
<feature type="binding site" evidence="1">
    <location>
        <position position="364"/>
    </location>
    <ligand>
        <name>substrate</name>
    </ligand>
</feature>
<feature type="glycosylation site" description="N-linked (GlcNAc...) asparagine" evidence="2">
    <location>
        <position position="156"/>
    </location>
</feature>
<feature type="glycosylation site" description="N-linked (GlcNAc...) asparagine" evidence="2">
    <location>
        <position position="373"/>
    </location>
</feature>
<feature type="glycosylation site" description="N-linked (GlcNAc...) asparagine" evidence="2">
    <location>
        <position position="402"/>
    </location>
</feature>
<feature type="glycosylation site" description="N-linked (GlcNAc...) asparagine" evidence="2">
    <location>
        <position position="453"/>
    </location>
</feature>
<feature type="glycosylation site" description="N-linked (GlcNAc...) asparagine" evidence="2">
    <location>
        <position position="478"/>
    </location>
</feature>
<feature type="glycosylation site" description="N-linked (GlcNAc...) asparagine" evidence="2">
    <location>
        <position position="522"/>
    </location>
</feature>
<feature type="glycosylation site" description="N-linked (GlcNAc...) asparagine" evidence="2">
    <location>
        <position position="622"/>
    </location>
</feature>
<feature type="glycosylation site" description="N-linked (GlcNAc...) asparagine" evidence="2">
    <location>
        <position position="760"/>
    </location>
</feature>
<feature type="glycosylation site" description="N-linked (GlcNAc...) asparagine" evidence="2">
    <location>
        <position position="777"/>
    </location>
</feature>
<feature type="glycosylation site" description="N-linked (GlcNAc...) asparagine" evidence="2">
    <location>
        <position position="805"/>
    </location>
</feature>
<feature type="glycosylation site" description="N-linked (GlcNAc...) asparagine" evidence="2">
    <location>
        <position position="914"/>
    </location>
</feature>
<feature type="disulfide bond" evidence="1">
    <location>
        <begin position="205"/>
        <end position="206"/>
    </location>
</feature>
<feature type="disulfide bond" evidence="1">
    <location>
        <begin position="266"/>
        <end position="315"/>
    </location>
</feature>
<name>BGALA_ASPFN</name>
<organism>
    <name type="scientific">Aspergillus flavus (strain ATCC 200026 / FGSC A1120 / IAM 13836 / NRRL 3357 / JCM 12722 / SRRC 167)</name>
    <dbReference type="NCBI Taxonomy" id="332952"/>
    <lineage>
        <taxon>Eukaryota</taxon>
        <taxon>Fungi</taxon>
        <taxon>Dikarya</taxon>
        <taxon>Ascomycota</taxon>
        <taxon>Pezizomycotina</taxon>
        <taxon>Eurotiomycetes</taxon>
        <taxon>Eurotiomycetidae</taxon>
        <taxon>Eurotiales</taxon>
        <taxon>Aspergillaceae</taxon>
        <taxon>Aspergillus</taxon>
        <taxon>Aspergillus subgen. Circumdati</taxon>
    </lineage>
</organism>
<gene>
    <name type="primary">lacA</name>
    <name type="ORF">AFLA_017100</name>
</gene>
<dbReference type="EC" id="3.2.1.23"/>
<dbReference type="EMBL" id="EQ963474">
    <property type="protein sequence ID" value="EED54458.1"/>
    <property type="molecule type" value="Genomic_DNA"/>
</dbReference>
<dbReference type="RefSeq" id="XP_002375730.1">
    <property type="nucleotide sequence ID" value="XM_002375689.1"/>
</dbReference>
<dbReference type="SMR" id="B8N6V7"/>
<dbReference type="STRING" id="332952.B8N6V7"/>
<dbReference type="GlyCosmos" id="B8N6V7">
    <property type="glycosylation" value="11 sites, No reported glycans"/>
</dbReference>
<dbReference type="EnsemblFungi" id="EED54458">
    <property type="protein sequence ID" value="EED54458"/>
    <property type="gene ID" value="AFLA_017100"/>
</dbReference>
<dbReference type="VEuPathDB" id="FungiDB:AFLA_002164"/>
<dbReference type="eggNOG" id="KOG0496">
    <property type="taxonomic scope" value="Eukaryota"/>
</dbReference>
<dbReference type="HOGENOM" id="CLU_005732_2_0_1"/>
<dbReference type="OMA" id="NEYSGAC"/>
<dbReference type="GO" id="GO:0005576">
    <property type="term" value="C:extracellular region"/>
    <property type="evidence" value="ECO:0007669"/>
    <property type="project" value="UniProtKB-SubCell"/>
</dbReference>
<dbReference type="GO" id="GO:0004565">
    <property type="term" value="F:beta-galactosidase activity"/>
    <property type="evidence" value="ECO:0007669"/>
    <property type="project" value="UniProtKB-EC"/>
</dbReference>
<dbReference type="GO" id="GO:0000272">
    <property type="term" value="P:polysaccharide catabolic process"/>
    <property type="evidence" value="ECO:0007669"/>
    <property type="project" value="UniProtKB-KW"/>
</dbReference>
<dbReference type="FunFam" id="2.102.20.10:FF:000001">
    <property type="entry name" value="Beta-galactosidase A"/>
    <property type="match status" value="1"/>
</dbReference>
<dbReference type="FunFam" id="2.60.120.260:FF:000065">
    <property type="entry name" value="Beta-galactosidase A"/>
    <property type="match status" value="1"/>
</dbReference>
<dbReference type="FunFam" id="2.60.120.260:FF:000088">
    <property type="entry name" value="Beta-galactosidase A"/>
    <property type="match status" value="1"/>
</dbReference>
<dbReference type="FunFam" id="2.60.390.10:FF:000001">
    <property type="entry name" value="Beta-galactosidase A"/>
    <property type="match status" value="1"/>
</dbReference>
<dbReference type="FunFam" id="3.20.20.80:FF:000040">
    <property type="entry name" value="Beta-galactosidase A"/>
    <property type="match status" value="1"/>
</dbReference>
<dbReference type="Gene3D" id="2.102.20.10">
    <property type="entry name" value="Beta-galactosidase, domain 2"/>
    <property type="match status" value="1"/>
</dbReference>
<dbReference type="Gene3D" id="2.60.390.10">
    <property type="entry name" value="Beta-galactosidase, domain 3"/>
    <property type="match status" value="1"/>
</dbReference>
<dbReference type="Gene3D" id="2.60.120.260">
    <property type="entry name" value="Galactose-binding domain-like"/>
    <property type="match status" value="2"/>
</dbReference>
<dbReference type="Gene3D" id="3.20.20.80">
    <property type="entry name" value="Glycosidases"/>
    <property type="match status" value="1"/>
</dbReference>
<dbReference type="InterPro" id="IPR018954">
    <property type="entry name" value="Betagal_dom2"/>
</dbReference>
<dbReference type="InterPro" id="IPR037110">
    <property type="entry name" value="Betagal_dom2_sf"/>
</dbReference>
<dbReference type="InterPro" id="IPR025972">
    <property type="entry name" value="BetaGal_dom3"/>
</dbReference>
<dbReference type="InterPro" id="IPR036833">
    <property type="entry name" value="BetaGal_dom3_sf"/>
</dbReference>
<dbReference type="InterPro" id="IPR025300">
    <property type="entry name" value="BetaGal_jelly_roll_dom"/>
</dbReference>
<dbReference type="InterPro" id="IPR008979">
    <property type="entry name" value="Galactose-bd-like_sf"/>
</dbReference>
<dbReference type="InterPro" id="IPR031330">
    <property type="entry name" value="Gly_Hdrlase_35_cat"/>
</dbReference>
<dbReference type="InterPro" id="IPR019801">
    <property type="entry name" value="Glyco_hydro_35_CS"/>
</dbReference>
<dbReference type="InterPro" id="IPR001944">
    <property type="entry name" value="Glycoside_Hdrlase_35"/>
</dbReference>
<dbReference type="InterPro" id="IPR017853">
    <property type="entry name" value="Glycoside_hydrolase_SF"/>
</dbReference>
<dbReference type="PANTHER" id="PTHR23421">
    <property type="entry name" value="BETA-GALACTOSIDASE RELATED"/>
    <property type="match status" value="1"/>
</dbReference>
<dbReference type="Pfam" id="PF13364">
    <property type="entry name" value="BetaGal_ABD2"/>
    <property type="match status" value="2"/>
</dbReference>
<dbReference type="Pfam" id="PF10435">
    <property type="entry name" value="BetaGal_dom2"/>
    <property type="match status" value="1"/>
</dbReference>
<dbReference type="Pfam" id="PF13363">
    <property type="entry name" value="BetaGal_dom3"/>
    <property type="match status" value="1"/>
</dbReference>
<dbReference type="Pfam" id="PF01301">
    <property type="entry name" value="Glyco_hydro_35"/>
    <property type="match status" value="1"/>
</dbReference>
<dbReference type="PRINTS" id="PR00742">
    <property type="entry name" value="GLHYDRLASE35"/>
</dbReference>
<dbReference type="SMART" id="SM01029">
    <property type="entry name" value="BetaGal_dom2"/>
    <property type="match status" value="1"/>
</dbReference>
<dbReference type="SUPFAM" id="SSF51445">
    <property type="entry name" value="(Trans)glycosidases"/>
    <property type="match status" value="1"/>
</dbReference>
<dbReference type="SUPFAM" id="SSF117100">
    <property type="entry name" value="Beta-galactosidase LacA, domain 3"/>
    <property type="match status" value="1"/>
</dbReference>
<dbReference type="SUPFAM" id="SSF49785">
    <property type="entry name" value="Galactose-binding domain-like"/>
    <property type="match status" value="2"/>
</dbReference>
<dbReference type="SUPFAM" id="SSF51011">
    <property type="entry name" value="Glycosyl hydrolase domain"/>
    <property type="match status" value="1"/>
</dbReference>
<dbReference type="PROSITE" id="PS01182">
    <property type="entry name" value="GLYCOSYL_HYDROL_F35"/>
    <property type="match status" value="1"/>
</dbReference>
<protein>
    <recommendedName>
        <fullName>Probable beta-galactosidase A</fullName>
        <ecNumber>3.2.1.23</ecNumber>
    </recommendedName>
    <alternativeName>
        <fullName>Lactase A</fullName>
    </alternativeName>
</protein>
<reference key="1">
    <citation type="journal article" date="2015" name="Genome Announc.">
        <title>Genome sequence of Aspergillus flavus NRRL 3357, a strain that causes aflatoxin contamination of food and feed.</title>
        <authorList>
            <person name="Nierman W.C."/>
            <person name="Yu J."/>
            <person name="Fedorova-Abrams N.D."/>
            <person name="Losada L."/>
            <person name="Cleveland T.E."/>
            <person name="Bhatnagar D."/>
            <person name="Bennett J.W."/>
            <person name="Dean R."/>
            <person name="Payne G.A."/>
        </authorList>
    </citation>
    <scope>NUCLEOTIDE SEQUENCE [LARGE SCALE GENOMIC DNA]</scope>
    <source>
        <strain>ATCC 200026 / FGSC A1120 / IAM 13836 / NRRL 3357 / JCM 12722 / SRRC 167</strain>
    </source>
</reference>
<evidence type="ECO:0000250" key="1"/>
<evidence type="ECO:0000255" key="2"/>
<evidence type="ECO:0000305" key="3"/>
<proteinExistence type="inferred from homology"/>
<accession>B8N6V7</accession>
<keyword id="KW-0119">Carbohydrate metabolism</keyword>
<keyword id="KW-1015">Disulfide bond</keyword>
<keyword id="KW-0325">Glycoprotein</keyword>
<keyword id="KW-0326">Glycosidase</keyword>
<keyword id="KW-0378">Hydrolase</keyword>
<keyword id="KW-0624">Polysaccharide degradation</keyword>
<keyword id="KW-0964">Secreted</keyword>
<keyword id="KW-0732">Signal</keyword>
<comment type="function">
    <text evidence="1">Cleaves beta-linked terminal galactosyl residues from gangliosides, glycoproteins, and glycosaminoglycans.</text>
</comment>
<comment type="catalytic activity">
    <reaction>
        <text>Hydrolysis of terminal non-reducing beta-D-galactose residues in beta-D-galactosides.</text>
        <dbReference type="EC" id="3.2.1.23"/>
    </reaction>
</comment>
<comment type="subcellular location">
    <subcellularLocation>
        <location evidence="1">Secreted</location>
    </subcellularLocation>
</comment>
<comment type="similarity">
    <text evidence="3">Belongs to the glycosyl hydrolase 35 family.</text>
</comment>
<sequence length="1005" mass="109870">MKLLSVAAVALLAAQAAGASIKHRLNGFTILEHPDPAKRDLLQDIVTWDDKSLFINGERIMLFSGEVHPFRLPVPSLWLDIFHKIRALGFNCVSFYIDWALLEGKPGDYRAEGIFALEPFFDAAKEAGIYLIARPGSYINAEVSGGGFPGWLQRVNGTLRSSDEPFLKATDNYIANAAAAVAKAQITNGGPVILYQPENEYSGGCCGVKYPDADYMQYVMDQARKADIVVPFISNDASPSGHNAPGSGTGAVDIYGHDSYPLGFDCANPSVWPEGKLPDNFRTLHLEQSPSTPYSLLEFQAGAFDPWGGPGFEKCYALVNHEFSRVFYRNDLSFGVSTFNLYMTFGGTNWGNLGHPGGYTSYDYGSPITETRNVTREKYSDIKLLANFVKASPSYLTATPRNLTTGVYTDTSDLAVTPLIGDSPGSFFVVRHTDYSSQESTSYKLKLPTSAGNLTIPQLEGTLSLNGRDSKIHVVDYNVSGTNIIYSTAEVFTWKKFDGNKVLVLYGGPKEHHELAIASKSNVTIIEGSDSGIVSTRKGSSVIIGWDVSSTRRIVQVGDLRVFLLDRNSAYNYWVPELPTEGTSPGFSTSKTTASSIIVKAGYLLRGAHLDGADLHLTADFNATTPIEVIGAPTGAKNLFVNGEKASHTVDKNGIWSSEVKYAAPEIKLPGLKDLDWKYLDTLPEIKSSYDDSAWVSADLPKTKNTHRPLDTPTSLYSSDYGFHTGYLIYRGHFVANGKESEFFIRTQGGSAFGSSVWLNETYLGSWTGADYAMDGNSTYKLSQLESGKNYVITVVIDNLGLDENWTVGEETMKNPRGILSYKLSGQDASAITWKLTGNLGGEDYQDKVRGPLNEGGLYAERQGFHQPQPPSESWESGSPLEGLSKPGIGFYTAQFDLDLPKGWDVPLYFNFGNNTQAARAQLYVNGYQYGKFTGNVGPQTSFPVPEGILNYRGTNYVALSLWALESDGAKLGSFELSYTTPVLTGYGNVESPEQPKYEQRKGAY</sequence>